<protein>
    <recommendedName>
        <fullName evidence="1">Chorismate synthase</fullName>
        <shortName evidence="1">CS</shortName>
        <ecNumber evidence="1">4.2.3.5</ecNumber>
    </recommendedName>
    <alternativeName>
        <fullName evidence="1">5-enolpyruvylshikimate-3-phosphate phospholyase</fullName>
    </alternativeName>
</protein>
<name>AROC_CHRVO</name>
<comment type="function">
    <text evidence="1">Catalyzes the anti-1,4-elimination of the C-3 phosphate and the C-6 proR hydrogen from 5-enolpyruvylshikimate-3-phosphate (EPSP) to yield chorismate, which is the branch point compound that serves as the starting substrate for the three terminal pathways of aromatic amino acid biosynthesis. This reaction introduces a second double bond into the aromatic ring system.</text>
</comment>
<comment type="catalytic activity">
    <reaction evidence="1">
        <text>5-O-(1-carboxyvinyl)-3-phosphoshikimate = chorismate + phosphate</text>
        <dbReference type="Rhea" id="RHEA:21020"/>
        <dbReference type="ChEBI" id="CHEBI:29748"/>
        <dbReference type="ChEBI" id="CHEBI:43474"/>
        <dbReference type="ChEBI" id="CHEBI:57701"/>
        <dbReference type="EC" id="4.2.3.5"/>
    </reaction>
</comment>
<comment type="cofactor">
    <cofactor evidence="1">
        <name>FMNH2</name>
        <dbReference type="ChEBI" id="CHEBI:57618"/>
    </cofactor>
    <text evidence="1">Reduced FMN (FMNH(2)).</text>
</comment>
<comment type="pathway">
    <text evidence="1">Metabolic intermediate biosynthesis; chorismate biosynthesis; chorismate from D-erythrose 4-phosphate and phosphoenolpyruvate: step 7/7.</text>
</comment>
<comment type="subunit">
    <text evidence="1">Homotetramer.</text>
</comment>
<comment type="similarity">
    <text evidence="1">Belongs to the chorismate synthase family.</text>
</comment>
<feature type="chain" id="PRO_0000140576" description="Chorismate synthase">
    <location>
        <begin position="1"/>
        <end position="366"/>
    </location>
</feature>
<feature type="binding site" evidence="1">
    <location>
        <position position="48"/>
    </location>
    <ligand>
        <name>NADP(+)</name>
        <dbReference type="ChEBI" id="CHEBI:58349"/>
    </ligand>
</feature>
<feature type="binding site" evidence="1">
    <location>
        <position position="54"/>
    </location>
    <ligand>
        <name>NADP(+)</name>
        <dbReference type="ChEBI" id="CHEBI:58349"/>
    </ligand>
</feature>
<feature type="binding site" evidence="1">
    <location>
        <begin position="125"/>
        <end position="127"/>
    </location>
    <ligand>
        <name>FMN</name>
        <dbReference type="ChEBI" id="CHEBI:58210"/>
    </ligand>
</feature>
<feature type="binding site" evidence="1">
    <location>
        <begin position="238"/>
        <end position="239"/>
    </location>
    <ligand>
        <name>FMN</name>
        <dbReference type="ChEBI" id="CHEBI:58210"/>
    </ligand>
</feature>
<feature type="binding site" evidence="1">
    <location>
        <position position="278"/>
    </location>
    <ligand>
        <name>FMN</name>
        <dbReference type="ChEBI" id="CHEBI:58210"/>
    </ligand>
</feature>
<feature type="binding site" evidence="1">
    <location>
        <begin position="293"/>
        <end position="297"/>
    </location>
    <ligand>
        <name>FMN</name>
        <dbReference type="ChEBI" id="CHEBI:58210"/>
    </ligand>
</feature>
<feature type="binding site" evidence="1">
    <location>
        <position position="319"/>
    </location>
    <ligand>
        <name>FMN</name>
        <dbReference type="ChEBI" id="CHEBI:58210"/>
    </ligand>
</feature>
<keyword id="KW-0028">Amino-acid biosynthesis</keyword>
<keyword id="KW-0057">Aromatic amino acid biosynthesis</keyword>
<keyword id="KW-0274">FAD</keyword>
<keyword id="KW-0285">Flavoprotein</keyword>
<keyword id="KW-0288">FMN</keyword>
<keyword id="KW-0456">Lyase</keyword>
<keyword id="KW-0521">NADP</keyword>
<keyword id="KW-1185">Reference proteome</keyword>
<gene>
    <name evidence="1" type="primary">aroC</name>
    <name type="ordered locus">CV_1187</name>
</gene>
<accession>Q7NYT5</accession>
<proteinExistence type="inferred from homology"/>
<dbReference type="EC" id="4.2.3.5" evidence="1"/>
<dbReference type="EMBL" id="AE016825">
    <property type="protein sequence ID" value="AAQ58862.1"/>
    <property type="molecule type" value="Genomic_DNA"/>
</dbReference>
<dbReference type="RefSeq" id="WP_011134742.1">
    <property type="nucleotide sequence ID" value="NC_005085.1"/>
</dbReference>
<dbReference type="SMR" id="Q7NYT5"/>
<dbReference type="STRING" id="243365.CV_1187"/>
<dbReference type="KEGG" id="cvi:CV_1187"/>
<dbReference type="eggNOG" id="COG0082">
    <property type="taxonomic scope" value="Bacteria"/>
</dbReference>
<dbReference type="HOGENOM" id="CLU_034547_0_2_4"/>
<dbReference type="OrthoDB" id="9771806at2"/>
<dbReference type="UniPathway" id="UPA00053">
    <property type="reaction ID" value="UER00090"/>
</dbReference>
<dbReference type="Proteomes" id="UP000001424">
    <property type="component" value="Chromosome"/>
</dbReference>
<dbReference type="GO" id="GO:0005829">
    <property type="term" value="C:cytosol"/>
    <property type="evidence" value="ECO:0007669"/>
    <property type="project" value="TreeGrafter"/>
</dbReference>
<dbReference type="GO" id="GO:0004107">
    <property type="term" value="F:chorismate synthase activity"/>
    <property type="evidence" value="ECO:0007669"/>
    <property type="project" value="UniProtKB-UniRule"/>
</dbReference>
<dbReference type="GO" id="GO:0010181">
    <property type="term" value="F:FMN binding"/>
    <property type="evidence" value="ECO:0007669"/>
    <property type="project" value="TreeGrafter"/>
</dbReference>
<dbReference type="GO" id="GO:0008652">
    <property type="term" value="P:amino acid biosynthetic process"/>
    <property type="evidence" value="ECO:0007669"/>
    <property type="project" value="UniProtKB-KW"/>
</dbReference>
<dbReference type="GO" id="GO:0009073">
    <property type="term" value="P:aromatic amino acid family biosynthetic process"/>
    <property type="evidence" value="ECO:0007669"/>
    <property type="project" value="UniProtKB-KW"/>
</dbReference>
<dbReference type="GO" id="GO:0009423">
    <property type="term" value="P:chorismate biosynthetic process"/>
    <property type="evidence" value="ECO:0007669"/>
    <property type="project" value="UniProtKB-UniRule"/>
</dbReference>
<dbReference type="CDD" id="cd07304">
    <property type="entry name" value="Chorismate_synthase"/>
    <property type="match status" value="1"/>
</dbReference>
<dbReference type="FunFam" id="3.60.150.10:FF:000001">
    <property type="entry name" value="Chorismate synthase"/>
    <property type="match status" value="1"/>
</dbReference>
<dbReference type="Gene3D" id="3.60.150.10">
    <property type="entry name" value="Chorismate synthase AroC"/>
    <property type="match status" value="1"/>
</dbReference>
<dbReference type="HAMAP" id="MF_00300">
    <property type="entry name" value="Chorismate_synth"/>
    <property type="match status" value="1"/>
</dbReference>
<dbReference type="InterPro" id="IPR000453">
    <property type="entry name" value="Chorismate_synth"/>
</dbReference>
<dbReference type="InterPro" id="IPR035904">
    <property type="entry name" value="Chorismate_synth_AroC_sf"/>
</dbReference>
<dbReference type="InterPro" id="IPR020541">
    <property type="entry name" value="Chorismate_synthase_CS"/>
</dbReference>
<dbReference type="NCBIfam" id="TIGR00033">
    <property type="entry name" value="aroC"/>
    <property type="match status" value="1"/>
</dbReference>
<dbReference type="NCBIfam" id="NF003793">
    <property type="entry name" value="PRK05382.1"/>
    <property type="match status" value="1"/>
</dbReference>
<dbReference type="PANTHER" id="PTHR21085">
    <property type="entry name" value="CHORISMATE SYNTHASE"/>
    <property type="match status" value="1"/>
</dbReference>
<dbReference type="PANTHER" id="PTHR21085:SF0">
    <property type="entry name" value="CHORISMATE SYNTHASE"/>
    <property type="match status" value="1"/>
</dbReference>
<dbReference type="Pfam" id="PF01264">
    <property type="entry name" value="Chorismate_synt"/>
    <property type="match status" value="1"/>
</dbReference>
<dbReference type="PIRSF" id="PIRSF001456">
    <property type="entry name" value="Chorismate_synth"/>
    <property type="match status" value="1"/>
</dbReference>
<dbReference type="SUPFAM" id="SSF103263">
    <property type="entry name" value="Chorismate synthase, AroC"/>
    <property type="match status" value="1"/>
</dbReference>
<dbReference type="PROSITE" id="PS00787">
    <property type="entry name" value="CHORISMATE_SYNTHASE_1"/>
    <property type="match status" value="1"/>
</dbReference>
<dbReference type="PROSITE" id="PS00788">
    <property type="entry name" value="CHORISMATE_SYNTHASE_2"/>
    <property type="match status" value="1"/>
</dbReference>
<dbReference type="PROSITE" id="PS00789">
    <property type="entry name" value="CHORISMATE_SYNTHASE_3"/>
    <property type="match status" value="1"/>
</dbReference>
<organism>
    <name type="scientific">Chromobacterium violaceum (strain ATCC 12472 / DSM 30191 / JCM 1249 / CCUG 213 / NBRC 12614 / NCIMB 9131 / NCTC 9757 / MK)</name>
    <dbReference type="NCBI Taxonomy" id="243365"/>
    <lineage>
        <taxon>Bacteria</taxon>
        <taxon>Pseudomonadati</taxon>
        <taxon>Pseudomonadota</taxon>
        <taxon>Betaproteobacteria</taxon>
        <taxon>Neisseriales</taxon>
        <taxon>Chromobacteriaceae</taxon>
        <taxon>Chromobacterium</taxon>
    </lineage>
</organism>
<reference key="1">
    <citation type="journal article" date="2003" name="Proc. Natl. Acad. Sci. U.S.A.">
        <title>The complete genome sequence of Chromobacterium violaceum reveals remarkable and exploitable bacterial adaptability.</title>
        <authorList>
            <person name="Vasconcelos A.T.R."/>
            <person name="de Almeida D.F."/>
            <person name="Hungria M."/>
            <person name="Guimaraes C.T."/>
            <person name="Antonio R.V."/>
            <person name="Almeida F.C."/>
            <person name="de Almeida L.G.P."/>
            <person name="de Almeida R."/>
            <person name="Alves-Gomes J.A."/>
            <person name="Andrade E.M."/>
            <person name="Araripe J."/>
            <person name="de Araujo M.F.F."/>
            <person name="Astolfi-Filho S."/>
            <person name="Azevedo V."/>
            <person name="Baptista A.J."/>
            <person name="Bataus L.A.M."/>
            <person name="Batista J.S."/>
            <person name="Belo A."/>
            <person name="van den Berg C."/>
            <person name="Bogo M."/>
            <person name="Bonatto S."/>
            <person name="Bordignon J."/>
            <person name="Brigido M.M."/>
            <person name="Brito C.A."/>
            <person name="Brocchi M."/>
            <person name="Burity H.A."/>
            <person name="Camargo A.A."/>
            <person name="Cardoso D.D.P."/>
            <person name="Carneiro N.P."/>
            <person name="Carraro D.M."/>
            <person name="Carvalho C.M.B."/>
            <person name="Cascardo J.C.M."/>
            <person name="Cavada B.S."/>
            <person name="Chueire L.M.O."/>
            <person name="Creczynski-Pasa T.B."/>
            <person name="Cunha-Junior N.C."/>
            <person name="Fagundes N."/>
            <person name="Falcao C.L."/>
            <person name="Fantinatti F."/>
            <person name="Farias I.P."/>
            <person name="Felipe M.S.S."/>
            <person name="Ferrari L.P."/>
            <person name="Ferro J.A."/>
            <person name="Ferro M.I.T."/>
            <person name="Franco G.R."/>
            <person name="Freitas N.S.A."/>
            <person name="Furlan L.R."/>
            <person name="Gazzinelli R.T."/>
            <person name="Gomes E.A."/>
            <person name="Goncalves P.R."/>
            <person name="Grangeiro T.B."/>
            <person name="Grattapaglia D."/>
            <person name="Grisard E.C."/>
            <person name="Hanna E.S."/>
            <person name="Jardim S.N."/>
            <person name="Laurino J."/>
            <person name="Leoi L.C.T."/>
            <person name="Lima L.F.A."/>
            <person name="Loureiro M.F."/>
            <person name="Lyra M.C.C.P."/>
            <person name="Madeira H.M.F."/>
            <person name="Manfio G.P."/>
            <person name="Maranhao A.Q."/>
            <person name="Martins W.S."/>
            <person name="di Mauro S.M.Z."/>
            <person name="de Medeiros S.R.B."/>
            <person name="Meissner R.V."/>
            <person name="Moreira M.A.M."/>
            <person name="Nascimento F.F."/>
            <person name="Nicolas M.F."/>
            <person name="Oliveira J.G."/>
            <person name="Oliveira S.C."/>
            <person name="Paixao R.F.C."/>
            <person name="Parente J.A."/>
            <person name="Pedrosa F.O."/>
            <person name="Pena S.D.J."/>
            <person name="Pereira J.O."/>
            <person name="Pereira M."/>
            <person name="Pinto L.S.R.C."/>
            <person name="Pinto L.S."/>
            <person name="Porto J.I.R."/>
            <person name="Potrich D.P."/>
            <person name="Ramalho-Neto C.E."/>
            <person name="Reis A.M.M."/>
            <person name="Rigo L.U."/>
            <person name="Rondinelli E."/>
            <person name="Santos E.B.P."/>
            <person name="Santos F.R."/>
            <person name="Schneider M.P.C."/>
            <person name="Seuanez H.N."/>
            <person name="Silva A.M.R."/>
            <person name="da Silva A.L.C."/>
            <person name="Silva D.W."/>
            <person name="Silva R."/>
            <person name="Simoes I.C."/>
            <person name="Simon D."/>
            <person name="Soares C.M.A."/>
            <person name="Soares R.B.A."/>
            <person name="Souza E.M."/>
            <person name="Souza K.R.L."/>
            <person name="Souza R.C."/>
            <person name="Steffens M.B.R."/>
            <person name="Steindel M."/>
            <person name="Teixeira S.R."/>
            <person name="Urmenyi T."/>
            <person name="Vettore A."/>
            <person name="Wassem R."/>
            <person name="Zaha A."/>
            <person name="Simpson A.J.G."/>
        </authorList>
    </citation>
    <scope>NUCLEOTIDE SEQUENCE [LARGE SCALE GENOMIC DNA]</scope>
    <source>
        <strain>ATCC 12472 / DSM 30191 / JCM 1249 / CCUG 213 / NBRC 12614 / NCIMB 9131 / NCTC 9757 / MK</strain>
    </source>
</reference>
<evidence type="ECO:0000255" key="1">
    <source>
        <dbReference type="HAMAP-Rule" id="MF_00300"/>
    </source>
</evidence>
<sequence>MSGSSMGRLFTVTSFGESHGPGIGCVVDGCPPGLALSEADIQLELDRRKPGTSRHVTQRREPDTVEILSGVYEGKTTGTPIALLIRNTDQRSKDYGNIADTFRPGHADYCYWHKYGTRDPRGGGRSSARETAVRVAAGAIAKKWLNEKYGIVIRGHMTQIGEVAIPFKSWEHVGGNPFFSADPDIVPRLEEYMDSIRKSLDSIGARLRVVADNVPVGWGEPVFDRLDADIAYAMMSINAVKGVEIGAGFGCVTQKGSEHGDELTPRGFASNHAGGVLGGISTGQQIDVSIAIKPTSSIAQPRRSINKQGEAVTMETHGRHDPCVGIRATPIAEAMLALVLIDHALRHRAQCGDVRVETPRIAGHIG</sequence>